<accession>Q1XD96</accession>
<gene>
    <name evidence="1" type="primary">psbE</name>
</gene>
<sequence length="84" mass="9467">MSGGSTGERPFSDIITSVRYWVIHSITIPALFVAGWLFVSTGLAYDVFGTPRPNEYFTQDRQQVPLVNDRFNAKQELEDLTKGI</sequence>
<geneLocation type="chloroplast"/>
<organism>
    <name type="scientific">Pyropia yezoensis</name>
    <name type="common">Susabi-nori</name>
    <name type="synonym">Porphyra yezoensis</name>
    <dbReference type="NCBI Taxonomy" id="2788"/>
    <lineage>
        <taxon>Eukaryota</taxon>
        <taxon>Rhodophyta</taxon>
        <taxon>Bangiophyceae</taxon>
        <taxon>Bangiales</taxon>
        <taxon>Bangiaceae</taxon>
        <taxon>Pyropia</taxon>
    </lineage>
</organism>
<feature type="chain" id="PRO_0000275721" description="Cytochrome b559 subunit alpha">
    <location>
        <begin position="1"/>
        <end position="84"/>
    </location>
</feature>
<feature type="transmembrane region" description="Helical" evidence="1">
    <location>
        <begin position="22"/>
        <end position="36"/>
    </location>
</feature>
<feature type="binding site" description="axial binding residue" evidence="1">
    <location>
        <position position="24"/>
    </location>
    <ligand>
        <name>heme</name>
        <dbReference type="ChEBI" id="CHEBI:30413"/>
        <note>ligand shared with beta subunit</note>
    </ligand>
    <ligandPart>
        <name>Fe</name>
        <dbReference type="ChEBI" id="CHEBI:18248"/>
    </ligandPart>
</feature>
<evidence type="ECO:0000255" key="1">
    <source>
        <dbReference type="HAMAP-Rule" id="MF_00642"/>
    </source>
</evidence>
<name>PSBE_PYRYE</name>
<proteinExistence type="inferred from homology"/>
<keyword id="KW-0150">Chloroplast</keyword>
<keyword id="KW-0249">Electron transport</keyword>
<keyword id="KW-0349">Heme</keyword>
<keyword id="KW-0408">Iron</keyword>
<keyword id="KW-0472">Membrane</keyword>
<keyword id="KW-0479">Metal-binding</keyword>
<keyword id="KW-0602">Photosynthesis</keyword>
<keyword id="KW-0604">Photosystem II</keyword>
<keyword id="KW-0934">Plastid</keyword>
<keyword id="KW-0793">Thylakoid</keyword>
<keyword id="KW-0812">Transmembrane</keyword>
<keyword id="KW-1133">Transmembrane helix</keyword>
<keyword id="KW-0813">Transport</keyword>
<reference key="1">
    <citation type="submission" date="2003-11" db="EMBL/GenBank/DDBJ databases">
        <title>Whole genome sequence of Porphyra yezoensis chloroplast.</title>
        <authorList>
            <person name="Kunimoto M."/>
            <person name="Morishima K."/>
            <person name="Yoshikawa M."/>
            <person name="Fukuda S."/>
            <person name="Kobayashi T."/>
            <person name="Kobayashi M."/>
            <person name="Okazaki T."/>
            <person name="Ohara I."/>
            <person name="Nakayama I."/>
        </authorList>
    </citation>
    <scope>NUCLEOTIDE SEQUENCE [LARGE SCALE GENOMIC DNA]</scope>
    <source>
        <strain>U-51</strain>
    </source>
</reference>
<dbReference type="EMBL" id="AP006715">
    <property type="protein sequence ID" value="BAE92515.1"/>
    <property type="molecule type" value="Genomic_DNA"/>
</dbReference>
<dbReference type="RefSeq" id="YP_537072.1">
    <property type="nucleotide sequence ID" value="NC_007932.1"/>
</dbReference>
<dbReference type="SMR" id="Q1XD96"/>
<dbReference type="GeneID" id="3978780"/>
<dbReference type="GO" id="GO:0009535">
    <property type="term" value="C:chloroplast thylakoid membrane"/>
    <property type="evidence" value="ECO:0007669"/>
    <property type="project" value="UniProtKB-SubCell"/>
</dbReference>
<dbReference type="GO" id="GO:0009539">
    <property type="term" value="C:photosystem II reaction center"/>
    <property type="evidence" value="ECO:0007669"/>
    <property type="project" value="InterPro"/>
</dbReference>
<dbReference type="GO" id="GO:0009055">
    <property type="term" value="F:electron transfer activity"/>
    <property type="evidence" value="ECO:0007669"/>
    <property type="project" value="UniProtKB-UniRule"/>
</dbReference>
<dbReference type="GO" id="GO:0020037">
    <property type="term" value="F:heme binding"/>
    <property type="evidence" value="ECO:0007669"/>
    <property type="project" value="InterPro"/>
</dbReference>
<dbReference type="GO" id="GO:0005506">
    <property type="term" value="F:iron ion binding"/>
    <property type="evidence" value="ECO:0007669"/>
    <property type="project" value="UniProtKB-UniRule"/>
</dbReference>
<dbReference type="GO" id="GO:0009767">
    <property type="term" value="P:photosynthetic electron transport chain"/>
    <property type="evidence" value="ECO:0007669"/>
    <property type="project" value="InterPro"/>
</dbReference>
<dbReference type="Gene3D" id="1.20.5.860">
    <property type="entry name" value="Photosystem II cytochrome b559, alpha subunit"/>
    <property type="match status" value="1"/>
</dbReference>
<dbReference type="HAMAP" id="MF_00642">
    <property type="entry name" value="PSII_PsbE"/>
    <property type="match status" value="1"/>
</dbReference>
<dbReference type="InterPro" id="IPR006217">
    <property type="entry name" value="PSII_cyt_b559_asu"/>
</dbReference>
<dbReference type="InterPro" id="IPR037025">
    <property type="entry name" value="PSII_cyt_b559_asu_sf"/>
</dbReference>
<dbReference type="InterPro" id="IPR006216">
    <property type="entry name" value="PSII_cyt_b559_CS"/>
</dbReference>
<dbReference type="InterPro" id="IPR013081">
    <property type="entry name" value="PSII_cyt_b559_N"/>
</dbReference>
<dbReference type="InterPro" id="IPR013082">
    <property type="entry name" value="PSII_cytb559_asu_lum"/>
</dbReference>
<dbReference type="NCBIfam" id="TIGR01332">
    <property type="entry name" value="cyt_b559_alpha"/>
    <property type="match status" value="1"/>
</dbReference>
<dbReference type="PANTHER" id="PTHR33391">
    <property type="entry name" value="CYTOCHROME B559 SUBUNIT BETA-RELATED"/>
    <property type="match status" value="1"/>
</dbReference>
<dbReference type="PANTHER" id="PTHR33391:SF9">
    <property type="entry name" value="CYTOCHROME B559 SUBUNIT BETA-RELATED"/>
    <property type="match status" value="1"/>
</dbReference>
<dbReference type="Pfam" id="PF00283">
    <property type="entry name" value="Cytochrom_B559"/>
    <property type="match status" value="1"/>
</dbReference>
<dbReference type="Pfam" id="PF00284">
    <property type="entry name" value="Cytochrom_B559a"/>
    <property type="match status" value="1"/>
</dbReference>
<dbReference type="PIRSF" id="PIRSF000036">
    <property type="entry name" value="PsbE"/>
    <property type="match status" value="1"/>
</dbReference>
<dbReference type="SUPFAM" id="SSF161045">
    <property type="entry name" value="Cytochrome b559 subunits"/>
    <property type="match status" value="1"/>
</dbReference>
<dbReference type="PROSITE" id="PS00537">
    <property type="entry name" value="CYTOCHROME_B559"/>
    <property type="match status" value="1"/>
</dbReference>
<comment type="function">
    <text evidence="1">This b-type cytochrome is tightly associated with the reaction center of photosystem II (PSII). PSII is a light-driven water:plastoquinone oxidoreductase that uses light energy to abstract electrons from H(2)O, generating O(2) and a proton gradient subsequently used for ATP formation. It consists of a core antenna complex that captures photons, and an electron transfer chain that converts photonic excitation into a charge separation.</text>
</comment>
<comment type="cofactor">
    <cofactor evidence="1">
        <name>heme b</name>
        <dbReference type="ChEBI" id="CHEBI:60344"/>
    </cofactor>
    <text evidence="1">With its partner (PsbF) binds heme. PSII binds additional chlorophylls, carotenoids and specific lipids.</text>
</comment>
<comment type="subunit">
    <text evidence="1">Heterodimer of an alpha subunit and a beta subunit. PSII is composed of 1 copy each of membrane proteins PsbA, PsbB, PsbC, PsbD, PsbE, PsbF, PsbH, PsbI, PsbJ, PsbK, PsbL, PsbM, PsbT, PsbX, PsbY, PsbZ, Psb30/Ycf12, at least 3 peripheral proteins of the oxygen-evolving complex and a large number of cofactors. It forms dimeric complexes.</text>
</comment>
<comment type="subcellular location">
    <subcellularLocation>
        <location evidence="1">Plastid</location>
        <location evidence="1">Chloroplast thylakoid membrane</location>
        <topology evidence="1">Single-pass membrane protein</topology>
    </subcellularLocation>
</comment>
<comment type="similarity">
    <text evidence="1">Belongs to the PsbE/PsbF family.</text>
</comment>
<protein>
    <recommendedName>
        <fullName evidence="1">Cytochrome b559 subunit alpha</fullName>
    </recommendedName>
    <alternativeName>
        <fullName evidence="1">PSII reaction center subunit V</fullName>
    </alternativeName>
</protein>